<gene>
    <name type="ordered locus">YE0063</name>
</gene>
<evidence type="ECO:0000255" key="1">
    <source>
        <dbReference type="HAMAP-Rule" id="MF_00018"/>
    </source>
</evidence>
<evidence type="ECO:0000255" key="2">
    <source>
        <dbReference type="PROSITE-ProRule" id="PRU01182"/>
    </source>
</evidence>
<accession>A1JHX2</accession>
<keyword id="KW-0378">Hydrolase</keyword>
<keyword id="KW-0479">Metal-binding</keyword>
<keyword id="KW-0482">Metalloprotease</keyword>
<keyword id="KW-0645">Protease</keyword>
<keyword id="KW-0862">Zinc</keyword>
<reference key="1">
    <citation type="journal article" date="2006" name="PLoS Genet.">
        <title>The complete genome sequence and comparative genome analysis of the high pathogenicity Yersinia enterocolitica strain 8081.</title>
        <authorList>
            <person name="Thomson N.R."/>
            <person name="Howard S."/>
            <person name="Wren B.W."/>
            <person name="Holden M.T.G."/>
            <person name="Crossman L."/>
            <person name="Challis G.L."/>
            <person name="Churcher C."/>
            <person name="Mungall K."/>
            <person name="Brooks K."/>
            <person name="Chillingworth T."/>
            <person name="Feltwell T."/>
            <person name="Abdellah Z."/>
            <person name="Hauser H."/>
            <person name="Jagels K."/>
            <person name="Maddison M."/>
            <person name="Moule S."/>
            <person name="Sanders M."/>
            <person name="Whitehead S."/>
            <person name="Quail M.A."/>
            <person name="Dougan G."/>
            <person name="Parkhill J."/>
            <person name="Prentice M.B."/>
        </authorList>
    </citation>
    <scope>NUCLEOTIDE SEQUENCE [LARGE SCALE GENOMIC DNA]</scope>
    <source>
        <strain>NCTC 13174 / 8081</strain>
    </source>
</reference>
<sequence>MEEWYGQVAPREKLLKYGAAVLTDAELLAIFLRTGIPGMHVMQMAEYLIEEFGSLYGLISADYQALCAQKGIGVSKYSQIQAIAELAGRCFSSHLMQESVLQNPEITQKFLQNILSHREREIFLVMFLDNQHRVIRHEEMFTGTISSVEIHPREIVREALKVNAAALILAHNHPSGKAEPSQADRLMTTQVIKACSLLDIRVLDHLVVGRGECVSFAERGWL</sequence>
<proteinExistence type="inferred from homology"/>
<organism>
    <name type="scientific">Yersinia enterocolitica serotype O:8 / biotype 1B (strain NCTC 13174 / 8081)</name>
    <dbReference type="NCBI Taxonomy" id="393305"/>
    <lineage>
        <taxon>Bacteria</taxon>
        <taxon>Pseudomonadati</taxon>
        <taxon>Pseudomonadota</taxon>
        <taxon>Gammaproteobacteria</taxon>
        <taxon>Enterobacterales</taxon>
        <taxon>Yersiniaceae</taxon>
        <taxon>Yersinia</taxon>
    </lineage>
</organism>
<comment type="similarity">
    <text evidence="1">Belongs to the UPF0758 family. YicR subfamily.</text>
</comment>
<dbReference type="EMBL" id="AM286415">
    <property type="protein sequence ID" value="CAL10205.1"/>
    <property type="molecule type" value="Genomic_DNA"/>
</dbReference>
<dbReference type="RefSeq" id="YP_001004457.1">
    <property type="nucleotide sequence ID" value="NC_008800.1"/>
</dbReference>
<dbReference type="SMR" id="A1JHX2"/>
<dbReference type="KEGG" id="yen:YE0063"/>
<dbReference type="PATRIC" id="fig|393305.7.peg.151"/>
<dbReference type="eggNOG" id="COG2003">
    <property type="taxonomic scope" value="Bacteria"/>
</dbReference>
<dbReference type="HOGENOM" id="CLU_073529_0_1_6"/>
<dbReference type="OrthoDB" id="9804482at2"/>
<dbReference type="Proteomes" id="UP000000642">
    <property type="component" value="Chromosome"/>
</dbReference>
<dbReference type="GO" id="GO:0046872">
    <property type="term" value="F:metal ion binding"/>
    <property type="evidence" value="ECO:0007669"/>
    <property type="project" value="UniProtKB-KW"/>
</dbReference>
<dbReference type="GO" id="GO:0008237">
    <property type="term" value="F:metallopeptidase activity"/>
    <property type="evidence" value="ECO:0007669"/>
    <property type="project" value="UniProtKB-KW"/>
</dbReference>
<dbReference type="GO" id="GO:0006508">
    <property type="term" value="P:proteolysis"/>
    <property type="evidence" value="ECO:0007669"/>
    <property type="project" value="UniProtKB-KW"/>
</dbReference>
<dbReference type="CDD" id="cd08071">
    <property type="entry name" value="MPN_DUF2466"/>
    <property type="match status" value="1"/>
</dbReference>
<dbReference type="Gene3D" id="3.40.140.10">
    <property type="entry name" value="Cytidine Deaminase, domain 2"/>
    <property type="match status" value="1"/>
</dbReference>
<dbReference type="HAMAP" id="MF_00018">
    <property type="entry name" value="UPF0758_YicR"/>
    <property type="match status" value="1"/>
</dbReference>
<dbReference type="InterPro" id="IPR037518">
    <property type="entry name" value="MPN"/>
</dbReference>
<dbReference type="InterPro" id="IPR025657">
    <property type="entry name" value="RadC_JAB"/>
</dbReference>
<dbReference type="InterPro" id="IPR010994">
    <property type="entry name" value="RuvA_2-like"/>
</dbReference>
<dbReference type="InterPro" id="IPR001405">
    <property type="entry name" value="UPF0758"/>
</dbReference>
<dbReference type="InterPro" id="IPR020891">
    <property type="entry name" value="UPF0758_CS"/>
</dbReference>
<dbReference type="InterPro" id="IPR046778">
    <property type="entry name" value="UPF0758_N"/>
</dbReference>
<dbReference type="InterPro" id="IPR022820">
    <property type="entry name" value="UPF0758_YicR"/>
</dbReference>
<dbReference type="NCBIfam" id="NF000642">
    <property type="entry name" value="PRK00024.1"/>
    <property type="match status" value="1"/>
</dbReference>
<dbReference type="NCBIfam" id="TIGR00608">
    <property type="entry name" value="radc"/>
    <property type="match status" value="1"/>
</dbReference>
<dbReference type="PANTHER" id="PTHR30471">
    <property type="entry name" value="DNA REPAIR PROTEIN RADC"/>
    <property type="match status" value="1"/>
</dbReference>
<dbReference type="PANTHER" id="PTHR30471:SF3">
    <property type="entry name" value="UPF0758 PROTEIN YEES-RELATED"/>
    <property type="match status" value="1"/>
</dbReference>
<dbReference type="Pfam" id="PF04002">
    <property type="entry name" value="RadC"/>
    <property type="match status" value="1"/>
</dbReference>
<dbReference type="Pfam" id="PF20582">
    <property type="entry name" value="UPF0758_N"/>
    <property type="match status" value="1"/>
</dbReference>
<dbReference type="SUPFAM" id="SSF102712">
    <property type="entry name" value="JAB1/MPN domain"/>
    <property type="match status" value="1"/>
</dbReference>
<dbReference type="SUPFAM" id="SSF47781">
    <property type="entry name" value="RuvA domain 2-like"/>
    <property type="match status" value="1"/>
</dbReference>
<dbReference type="PROSITE" id="PS50249">
    <property type="entry name" value="MPN"/>
    <property type="match status" value="1"/>
</dbReference>
<dbReference type="PROSITE" id="PS01302">
    <property type="entry name" value="UPF0758"/>
    <property type="match status" value="1"/>
</dbReference>
<protein>
    <recommendedName>
        <fullName evidence="1">UPF0758 protein YE0063</fullName>
    </recommendedName>
</protein>
<name>Y063_YERE8</name>
<feature type="chain" id="PRO_1000001706" description="UPF0758 protein YE0063">
    <location>
        <begin position="1"/>
        <end position="222"/>
    </location>
</feature>
<feature type="domain" description="MPN" evidence="2">
    <location>
        <begin position="100"/>
        <end position="222"/>
    </location>
</feature>
<feature type="short sequence motif" description="JAMM motif" evidence="2">
    <location>
        <begin position="171"/>
        <end position="184"/>
    </location>
</feature>
<feature type="binding site" evidence="2">
    <location>
        <position position="171"/>
    </location>
    <ligand>
        <name>Zn(2+)</name>
        <dbReference type="ChEBI" id="CHEBI:29105"/>
        <note>catalytic</note>
    </ligand>
</feature>
<feature type="binding site" evidence="2">
    <location>
        <position position="173"/>
    </location>
    <ligand>
        <name>Zn(2+)</name>
        <dbReference type="ChEBI" id="CHEBI:29105"/>
        <note>catalytic</note>
    </ligand>
</feature>
<feature type="binding site" evidence="2">
    <location>
        <position position="184"/>
    </location>
    <ligand>
        <name>Zn(2+)</name>
        <dbReference type="ChEBI" id="CHEBI:29105"/>
        <note>catalytic</note>
    </ligand>
</feature>